<dbReference type="EMBL" id="X04453">
    <property type="status" value="NOT_ANNOTATED_CDS"/>
    <property type="molecule type" value="Genomic_RNA"/>
</dbReference>
<dbReference type="EMBL" id="M15121">
    <property type="status" value="NOT_ANNOTATED_CDS"/>
    <property type="molecule type" value="Genomic_RNA"/>
</dbReference>
<dbReference type="SMR" id="P0C2X6"/>
<dbReference type="Proteomes" id="UP000007544">
    <property type="component" value="Genome"/>
</dbReference>
<keyword id="KW-0024">Alternative initiation</keyword>
<sequence>MRSKHNELKSPIMSCSKRTEWKSILGPLIFRQQMILTQNLNRKLKTIKACMYQIRKLSKLKALYRGL</sequence>
<protein>
    <recommendedName>
        <fullName>Protein C'</fullName>
    </recommendedName>
</protein>
<organismHost>
    <name type="scientific">Aedes</name>
    <dbReference type="NCBI Taxonomy" id="7158"/>
</organismHost>
<organismHost>
    <name type="scientific">Bos taurus</name>
    <name type="common">Bovine</name>
    <dbReference type="NCBI Taxonomy" id="9913"/>
</organismHost>
<organismHost>
    <name type="scientific">Culicoides</name>
    <dbReference type="NCBI Taxonomy" id="58271"/>
</organismHost>
<organismHost>
    <name type="scientific">Equus asinus</name>
    <name type="common">Donkey</name>
    <name type="synonym">Equus africanus asinus</name>
    <dbReference type="NCBI Taxonomy" id="9793"/>
</organismHost>
<organismHost>
    <name type="scientific">Equus caballus</name>
    <name type="common">Horse</name>
    <dbReference type="NCBI Taxonomy" id="9796"/>
</organismHost>
<organismHost>
    <name type="scientific">Homo sapiens</name>
    <name type="common">Human</name>
    <dbReference type="NCBI Taxonomy" id="9606"/>
</organismHost>
<organismHost>
    <name type="scientific">Lutzomyia</name>
    <dbReference type="NCBI Taxonomy" id="252607"/>
</organismHost>
<organismHost>
    <name type="scientific">Musca domestica</name>
    <name type="common">House fly</name>
    <dbReference type="NCBI Taxonomy" id="7370"/>
</organismHost>
<organismHost>
    <name type="scientific">Simuliidae</name>
    <name type="common">black flies</name>
    <dbReference type="NCBI Taxonomy" id="7190"/>
</organismHost>
<organismHost>
    <name type="scientific">Sus scrofa</name>
    <name type="common">Pig</name>
    <dbReference type="NCBI Taxonomy" id="9823"/>
</organismHost>
<accession>P0C2X6</accession>
<organism>
    <name type="scientific">Vesicular stomatitis Indiana virus (strain Glasgow)</name>
    <name type="common">VSIV</name>
    <dbReference type="NCBI Taxonomy" id="11278"/>
    <lineage>
        <taxon>Viruses</taxon>
        <taxon>Riboviria</taxon>
        <taxon>Orthornavirae</taxon>
        <taxon>Negarnaviricota</taxon>
        <taxon>Haploviricotina</taxon>
        <taxon>Monjiviricetes</taxon>
        <taxon>Mononegavirales</taxon>
        <taxon>Rhabdoviridae</taxon>
        <taxon>Alpharhabdovirinae</taxon>
        <taxon>Vesiculovirus</taxon>
        <taxon>Vesiculovirus indiana</taxon>
    </lineage>
</organism>
<comment type="function">
    <text evidence="1">Seems to stimulates transcription by the viral polymerase. May play a role in viral pathogenesis or transmission by insects vectors.</text>
</comment>
<comment type="alternative products">
    <event type="alternative initiation"/>
    <isoform>
        <id>P0C2X6-1</id>
        <name>C'</name>
        <sequence type="displayed"/>
    </isoform>
    <isoform>
        <id>P0C2X6-2</id>
        <name>C</name>
        <sequence type="described" ref="VSP_025747"/>
    </isoform>
</comment>
<comment type="miscellaneous">
    <text>The P gene has two overlapping open reading frames. One encodes the P protein and the other the C'/C proteins.</text>
</comment>
<comment type="similarity">
    <text evidence="2">Belongs to the rhabdoviruses C protein family.</text>
</comment>
<proteinExistence type="inferred from homology"/>
<feature type="chain" id="PRO_0000288654" description="Protein C'">
    <location>
        <begin position="1"/>
        <end position="67"/>
    </location>
</feature>
<feature type="splice variant" id="VSP_025747" description="In isoform C." evidence="2">
    <location>
        <begin position="1"/>
        <end position="12"/>
    </location>
</feature>
<reference key="1">
    <citation type="journal article" date="1986" name="J. Gen. Virol.">
        <title>Evolution of vesicular stomatitis virus in athymic nude mice: mutations associated with natural killer cell selection.</title>
        <authorList>
            <person name="Vandepol S.B."/>
            <person name="Holland J.J."/>
        </authorList>
    </citation>
    <scope>NUCLEOTIDE SEQUENCE [GENOMIC RNA]</scope>
</reference>
<reference key="2">
    <citation type="journal article" date="1987" name="J. Virol.">
        <title>Continuing coevolution of virus and defective interfering particles and of viral genome sequences during undiluted passages: virus mutants exhibiting nearly complete resistance to formerly dominant defective interfering particles.</title>
        <authorList>
            <person name="Depolo N.J."/>
            <person name="Giachetti C."/>
            <person name="Holland J.J."/>
        </authorList>
    </citation>
    <scope>NUCLEOTIDE SEQUENCE [GENOMIC RNA]</scope>
</reference>
<name>C_VSIVG</name>
<evidence type="ECO:0000250" key="1">
    <source>
        <dbReference type="UniProtKB" id="P0C2X2"/>
    </source>
</evidence>
<evidence type="ECO:0000305" key="2"/>
<gene>
    <name type="primary">P</name>
</gene>